<sequence length="201" mass="22680">MAEKFTQHTGLVVPLDAANVDTDAIIPKQFLQKVTRTGFGAHLFNDWRFLDEKGQQPNPEFVLNFPEYQGASILLARENFGCGSSREHAPWALTDYGFKVVIAPSFADIFYGNSFNNQLLPVKLSDEQVDELFTLVKANPGIKFEVDLEAQVVKAGDKTYSFKIDDFRRHCMLNGLDSIGLTLQHEDAIAEYENKQPAFMR</sequence>
<gene>
    <name evidence="1" type="primary">leuD</name>
    <name type="ordered locus">SSPA0108</name>
</gene>
<reference key="1">
    <citation type="journal article" date="2009" name="BMC Genomics">
        <title>Pseudogene accumulation in the evolutionary histories of Salmonella enterica serovars Paratyphi A and Typhi.</title>
        <authorList>
            <person name="Holt K.E."/>
            <person name="Thomson N.R."/>
            <person name="Wain J."/>
            <person name="Langridge G.C."/>
            <person name="Hasan R."/>
            <person name="Bhutta Z.A."/>
            <person name="Quail M.A."/>
            <person name="Norbertczak H."/>
            <person name="Walker D."/>
            <person name="Simmonds M."/>
            <person name="White B."/>
            <person name="Bason N."/>
            <person name="Mungall K."/>
            <person name="Dougan G."/>
            <person name="Parkhill J."/>
        </authorList>
    </citation>
    <scope>NUCLEOTIDE SEQUENCE [LARGE SCALE GENOMIC DNA]</scope>
    <source>
        <strain>AKU_12601</strain>
    </source>
</reference>
<comment type="function">
    <text evidence="1">Catalyzes the isomerization between 2-isopropylmalate and 3-isopropylmalate, via the formation of 2-isopropylmaleate.</text>
</comment>
<comment type="catalytic activity">
    <reaction evidence="1">
        <text>(2R,3S)-3-isopropylmalate = (2S)-2-isopropylmalate</text>
        <dbReference type="Rhea" id="RHEA:32287"/>
        <dbReference type="ChEBI" id="CHEBI:1178"/>
        <dbReference type="ChEBI" id="CHEBI:35121"/>
        <dbReference type="EC" id="4.2.1.33"/>
    </reaction>
</comment>
<comment type="pathway">
    <text evidence="1">Amino-acid biosynthesis; L-leucine biosynthesis; L-leucine from 3-methyl-2-oxobutanoate: step 2/4.</text>
</comment>
<comment type="subunit">
    <text evidence="1">Heterodimer of LeuC and LeuD.</text>
</comment>
<comment type="similarity">
    <text evidence="1">Belongs to the LeuD family. LeuD type 1 subfamily.</text>
</comment>
<accession>B5BLB2</accession>
<keyword id="KW-0028">Amino-acid biosynthesis</keyword>
<keyword id="KW-0100">Branched-chain amino acid biosynthesis</keyword>
<keyword id="KW-0432">Leucine biosynthesis</keyword>
<keyword id="KW-0456">Lyase</keyword>
<proteinExistence type="inferred from homology"/>
<dbReference type="EC" id="4.2.1.33" evidence="1"/>
<dbReference type="EMBL" id="FM200053">
    <property type="protein sequence ID" value="CAR58219.1"/>
    <property type="molecule type" value="Genomic_DNA"/>
</dbReference>
<dbReference type="RefSeq" id="WP_000818262.1">
    <property type="nucleotide sequence ID" value="NC_011147.1"/>
</dbReference>
<dbReference type="SMR" id="B5BLB2"/>
<dbReference type="KEGG" id="sek:SSPA0108"/>
<dbReference type="HOGENOM" id="CLU_081378_0_3_6"/>
<dbReference type="UniPathway" id="UPA00048">
    <property type="reaction ID" value="UER00071"/>
</dbReference>
<dbReference type="Proteomes" id="UP000001869">
    <property type="component" value="Chromosome"/>
</dbReference>
<dbReference type="GO" id="GO:0009316">
    <property type="term" value="C:3-isopropylmalate dehydratase complex"/>
    <property type="evidence" value="ECO:0007669"/>
    <property type="project" value="InterPro"/>
</dbReference>
<dbReference type="GO" id="GO:0003861">
    <property type="term" value="F:3-isopropylmalate dehydratase activity"/>
    <property type="evidence" value="ECO:0007669"/>
    <property type="project" value="UniProtKB-UniRule"/>
</dbReference>
<dbReference type="GO" id="GO:0009098">
    <property type="term" value="P:L-leucine biosynthetic process"/>
    <property type="evidence" value="ECO:0007669"/>
    <property type="project" value="UniProtKB-UniRule"/>
</dbReference>
<dbReference type="CDD" id="cd01577">
    <property type="entry name" value="IPMI_Swivel"/>
    <property type="match status" value="1"/>
</dbReference>
<dbReference type="FunFam" id="3.20.19.10:FF:000003">
    <property type="entry name" value="3-isopropylmalate dehydratase small subunit"/>
    <property type="match status" value="1"/>
</dbReference>
<dbReference type="Gene3D" id="3.20.19.10">
    <property type="entry name" value="Aconitase, domain 4"/>
    <property type="match status" value="1"/>
</dbReference>
<dbReference type="HAMAP" id="MF_01031">
    <property type="entry name" value="LeuD_type1"/>
    <property type="match status" value="1"/>
</dbReference>
<dbReference type="InterPro" id="IPR004431">
    <property type="entry name" value="3-IsopropMal_deHydase_ssu"/>
</dbReference>
<dbReference type="InterPro" id="IPR015928">
    <property type="entry name" value="Aconitase/3IPM_dehydase_swvl"/>
</dbReference>
<dbReference type="InterPro" id="IPR000573">
    <property type="entry name" value="AconitaseA/IPMdHydase_ssu_swvl"/>
</dbReference>
<dbReference type="InterPro" id="IPR033940">
    <property type="entry name" value="IPMI_Swivel"/>
</dbReference>
<dbReference type="InterPro" id="IPR050075">
    <property type="entry name" value="LeuD"/>
</dbReference>
<dbReference type="NCBIfam" id="TIGR00171">
    <property type="entry name" value="leuD"/>
    <property type="match status" value="1"/>
</dbReference>
<dbReference type="NCBIfam" id="NF002458">
    <property type="entry name" value="PRK01641.1"/>
    <property type="match status" value="1"/>
</dbReference>
<dbReference type="PANTHER" id="PTHR43345:SF5">
    <property type="entry name" value="3-ISOPROPYLMALATE DEHYDRATASE SMALL SUBUNIT"/>
    <property type="match status" value="1"/>
</dbReference>
<dbReference type="PANTHER" id="PTHR43345">
    <property type="entry name" value="3-ISOPROPYLMALATE DEHYDRATASE SMALL SUBUNIT 2-RELATED-RELATED"/>
    <property type="match status" value="1"/>
</dbReference>
<dbReference type="Pfam" id="PF00694">
    <property type="entry name" value="Aconitase_C"/>
    <property type="match status" value="1"/>
</dbReference>
<dbReference type="SUPFAM" id="SSF52016">
    <property type="entry name" value="LeuD/IlvD-like"/>
    <property type="match status" value="1"/>
</dbReference>
<evidence type="ECO:0000255" key="1">
    <source>
        <dbReference type="HAMAP-Rule" id="MF_01031"/>
    </source>
</evidence>
<feature type="chain" id="PRO_1000135831" description="3-isopropylmalate dehydratase small subunit">
    <location>
        <begin position="1"/>
        <end position="201"/>
    </location>
</feature>
<name>LEUD_SALPK</name>
<organism>
    <name type="scientific">Salmonella paratyphi A (strain AKU_12601)</name>
    <dbReference type="NCBI Taxonomy" id="554290"/>
    <lineage>
        <taxon>Bacteria</taxon>
        <taxon>Pseudomonadati</taxon>
        <taxon>Pseudomonadota</taxon>
        <taxon>Gammaproteobacteria</taxon>
        <taxon>Enterobacterales</taxon>
        <taxon>Enterobacteriaceae</taxon>
        <taxon>Salmonella</taxon>
    </lineage>
</organism>
<protein>
    <recommendedName>
        <fullName evidence="1">3-isopropylmalate dehydratase small subunit</fullName>
        <ecNumber evidence="1">4.2.1.33</ecNumber>
    </recommendedName>
    <alternativeName>
        <fullName evidence="1">Alpha-IPM isomerase</fullName>
        <shortName evidence="1">IPMI</shortName>
    </alternativeName>
    <alternativeName>
        <fullName evidence="1">Isopropylmalate isomerase</fullName>
    </alternativeName>
</protein>